<name>ECFT_STRE4</name>
<organism>
    <name type="scientific">Streptococcus equi subsp. equi (strain 4047)</name>
    <dbReference type="NCBI Taxonomy" id="553482"/>
    <lineage>
        <taxon>Bacteria</taxon>
        <taxon>Bacillati</taxon>
        <taxon>Bacillota</taxon>
        <taxon>Bacilli</taxon>
        <taxon>Lactobacillales</taxon>
        <taxon>Streptococcaceae</taxon>
        <taxon>Streptococcus</taxon>
    </lineage>
</organism>
<accession>C0MBF3</accession>
<keyword id="KW-1003">Cell membrane</keyword>
<keyword id="KW-0472">Membrane</keyword>
<keyword id="KW-0812">Transmembrane</keyword>
<keyword id="KW-1133">Transmembrane helix</keyword>
<keyword id="KW-0813">Transport</keyword>
<evidence type="ECO:0000255" key="1">
    <source>
        <dbReference type="HAMAP-Rule" id="MF_01461"/>
    </source>
</evidence>
<feature type="chain" id="PRO_0000409001" description="Energy-coupling factor transporter transmembrane protein EcfT">
    <location>
        <begin position="1"/>
        <end position="269"/>
    </location>
</feature>
<feature type="transmembrane region" description="Helical" evidence="1">
    <location>
        <begin position="28"/>
        <end position="48"/>
    </location>
</feature>
<feature type="transmembrane region" description="Helical" evidence="1">
    <location>
        <begin position="49"/>
        <end position="69"/>
    </location>
</feature>
<feature type="transmembrane region" description="Helical" evidence="1">
    <location>
        <begin position="73"/>
        <end position="93"/>
    </location>
</feature>
<feature type="transmembrane region" description="Helical" evidence="1">
    <location>
        <begin position="109"/>
        <end position="129"/>
    </location>
</feature>
<feature type="transmembrane region" description="Helical" evidence="1">
    <location>
        <begin position="246"/>
        <end position="266"/>
    </location>
</feature>
<sequence>MDKLILGRYIPGNSIIHRLDPRSKLLAMIIYIIIIFWANNVVTNLLLLAFTLLLIFLSQIKWSFFFNGVKPMIGIILFTTLFQVFFTQGGSVLFQLGIIKITSLGLSQAILIFMRFVLIIFFSTLLTLTTTPLSLSDAVEALLKPLVRFKVPAHEIGLMLSLSLRFVPTLMDDTTRIMNAQKARGVDFGEGNLIQKVKSIIPILIPLFASSFKRADALAIAMEARGYQGGDSRTKYRLLSWQLKDTLAIILVVILGIFLFCLKSPSRLT</sequence>
<dbReference type="EMBL" id="FM204883">
    <property type="protein sequence ID" value="CAW95622.1"/>
    <property type="molecule type" value="Genomic_DNA"/>
</dbReference>
<dbReference type="RefSeq" id="WP_015898702.1">
    <property type="nucleotide sequence ID" value="NC_012471.1"/>
</dbReference>
<dbReference type="SMR" id="C0MBF3"/>
<dbReference type="KEGG" id="seu:SEQ_2213"/>
<dbReference type="HOGENOM" id="CLU_056469_2_2_9"/>
<dbReference type="OrthoDB" id="8075495at2"/>
<dbReference type="Proteomes" id="UP000001365">
    <property type="component" value="Chromosome"/>
</dbReference>
<dbReference type="GO" id="GO:0005886">
    <property type="term" value="C:plasma membrane"/>
    <property type="evidence" value="ECO:0007669"/>
    <property type="project" value="UniProtKB-SubCell"/>
</dbReference>
<dbReference type="GO" id="GO:0022857">
    <property type="term" value="F:transmembrane transporter activity"/>
    <property type="evidence" value="ECO:0007669"/>
    <property type="project" value="UniProtKB-UniRule"/>
</dbReference>
<dbReference type="CDD" id="cd16914">
    <property type="entry name" value="EcfT"/>
    <property type="match status" value="1"/>
</dbReference>
<dbReference type="HAMAP" id="MF_01461">
    <property type="entry name" value="EcfT"/>
    <property type="match status" value="1"/>
</dbReference>
<dbReference type="InterPro" id="IPR003339">
    <property type="entry name" value="ABC/ECF_trnsptr_transmembrane"/>
</dbReference>
<dbReference type="InterPro" id="IPR024919">
    <property type="entry name" value="EcfT"/>
</dbReference>
<dbReference type="PANTHER" id="PTHR33514">
    <property type="entry name" value="PROTEIN ABCI12, CHLOROPLASTIC"/>
    <property type="match status" value="1"/>
</dbReference>
<dbReference type="PANTHER" id="PTHR33514:SF13">
    <property type="entry name" value="PROTEIN ABCI12, CHLOROPLASTIC"/>
    <property type="match status" value="1"/>
</dbReference>
<dbReference type="Pfam" id="PF02361">
    <property type="entry name" value="CbiQ"/>
    <property type="match status" value="1"/>
</dbReference>
<gene>
    <name evidence="1" type="primary">ecfT</name>
    <name type="ordered locus">SEQ_2213</name>
</gene>
<protein>
    <recommendedName>
        <fullName evidence="1">Energy-coupling factor transporter transmembrane protein EcfT</fullName>
        <shortName evidence="1">ECF transporter T component EcfT</shortName>
    </recommendedName>
</protein>
<proteinExistence type="inferred from homology"/>
<reference key="1">
    <citation type="journal article" date="2009" name="PLoS Pathog.">
        <title>Genomic evidence for the evolution of Streptococcus equi: host restriction, increased virulence, and genetic exchange with human pathogens.</title>
        <authorList>
            <person name="Holden M.T.G."/>
            <person name="Heather Z."/>
            <person name="Paillot R."/>
            <person name="Steward K.F."/>
            <person name="Webb K."/>
            <person name="Ainslie F."/>
            <person name="Jourdan T."/>
            <person name="Bason N.C."/>
            <person name="Holroyd N.E."/>
            <person name="Mungall K."/>
            <person name="Quail M.A."/>
            <person name="Sanders M."/>
            <person name="Simmonds M."/>
            <person name="Willey D."/>
            <person name="Brooks K."/>
            <person name="Aanensen D.M."/>
            <person name="Spratt B.G."/>
            <person name="Jolley K.A."/>
            <person name="Maiden M.C.J."/>
            <person name="Kehoe M."/>
            <person name="Chanter N."/>
            <person name="Bentley S.D."/>
            <person name="Robinson C."/>
            <person name="Maskell D.J."/>
            <person name="Parkhill J."/>
            <person name="Waller A.S."/>
        </authorList>
    </citation>
    <scope>NUCLEOTIDE SEQUENCE [LARGE SCALE GENOMIC DNA]</scope>
    <source>
        <strain>4047</strain>
    </source>
</reference>
<comment type="function">
    <text evidence="1">Transmembrane (T) component of an energy-coupling factor (ECF) ABC-transporter complex. Unlike classic ABC transporters this ECF transporter provides the energy necessary to transport a number of different substrates.</text>
</comment>
<comment type="subunit">
    <text evidence="1">Forms a stable energy-coupling factor (ECF) transporter complex composed of 2 membrane-embedded substrate-binding proteins (S component), 2 ATP-binding proteins (A component) and 2 transmembrane proteins (T component). May be able to interact with more than 1 S component at a time (By similarity).</text>
</comment>
<comment type="subcellular location">
    <subcellularLocation>
        <location evidence="1">Cell membrane</location>
        <topology evidence="1">Multi-pass membrane protein</topology>
    </subcellularLocation>
</comment>
<comment type="similarity">
    <text evidence="1">Belongs to the energy-coupling factor EcfT family.</text>
</comment>